<proteinExistence type="inferred from homology"/>
<gene>
    <name evidence="1" type="primary">alaS</name>
    <name type="ordered locus">CTA_0815</name>
</gene>
<keyword id="KW-0030">Aminoacyl-tRNA synthetase</keyword>
<keyword id="KW-0067">ATP-binding</keyword>
<keyword id="KW-0963">Cytoplasm</keyword>
<keyword id="KW-0436">Ligase</keyword>
<keyword id="KW-0479">Metal-binding</keyword>
<keyword id="KW-0547">Nucleotide-binding</keyword>
<keyword id="KW-0648">Protein biosynthesis</keyword>
<keyword id="KW-0694">RNA-binding</keyword>
<keyword id="KW-0820">tRNA-binding</keyword>
<keyword id="KW-0862">Zinc</keyword>
<evidence type="ECO:0000255" key="1">
    <source>
        <dbReference type="HAMAP-Rule" id="MF_00036"/>
    </source>
</evidence>
<name>SYA_CHLTA</name>
<accession>Q3KKU4</accession>
<feature type="chain" id="PRO_0000347547" description="Alanine--tRNA ligase">
    <location>
        <begin position="1"/>
        <end position="875"/>
    </location>
</feature>
<feature type="binding site" evidence="1">
    <location>
        <position position="561"/>
    </location>
    <ligand>
        <name>Zn(2+)</name>
        <dbReference type="ChEBI" id="CHEBI:29105"/>
    </ligand>
</feature>
<feature type="binding site" evidence="1">
    <location>
        <position position="565"/>
    </location>
    <ligand>
        <name>Zn(2+)</name>
        <dbReference type="ChEBI" id="CHEBI:29105"/>
    </ligand>
</feature>
<feature type="binding site" evidence="1">
    <location>
        <position position="663"/>
    </location>
    <ligand>
        <name>Zn(2+)</name>
        <dbReference type="ChEBI" id="CHEBI:29105"/>
    </ligand>
</feature>
<feature type="binding site" evidence="1">
    <location>
        <position position="667"/>
    </location>
    <ligand>
        <name>Zn(2+)</name>
        <dbReference type="ChEBI" id="CHEBI:29105"/>
    </ligand>
</feature>
<dbReference type="EC" id="6.1.1.7" evidence="1"/>
<dbReference type="EMBL" id="CP000051">
    <property type="protein sequence ID" value="AAX51028.1"/>
    <property type="molecule type" value="Genomic_DNA"/>
</dbReference>
<dbReference type="RefSeq" id="WP_010725333.1">
    <property type="nucleotide sequence ID" value="NC_007429.1"/>
</dbReference>
<dbReference type="SMR" id="Q3KKU4"/>
<dbReference type="KEGG" id="cta:CTA_0815"/>
<dbReference type="HOGENOM" id="CLU_004485_1_1_0"/>
<dbReference type="Proteomes" id="UP000002532">
    <property type="component" value="Chromosome"/>
</dbReference>
<dbReference type="GO" id="GO:0005829">
    <property type="term" value="C:cytosol"/>
    <property type="evidence" value="ECO:0007669"/>
    <property type="project" value="TreeGrafter"/>
</dbReference>
<dbReference type="GO" id="GO:0004813">
    <property type="term" value="F:alanine-tRNA ligase activity"/>
    <property type="evidence" value="ECO:0007669"/>
    <property type="project" value="UniProtKB-UniRule"/>
</dbReference>
<dbReference type="GO" id="GO:0002161">
    <property type="term" value="F:aminoacyl-tRNA deacylase activity"/>
    <property type="evidence" value="ECO:0007669"/>
    <property type="project" value="TreeGrafter"/>
</dbReference>
<dbReference type="GO" id="GO:0005524">
    <property type="term" value="F:ATP binding"/>
    <property type="evidence" value="ECO:0007669"/>
    <property type="project" value="UniProtKB-UniRule"/>
</dbReference>
<dbReference type="GO" id="GO:0000049">
    <property type="term" value="F:tRNA binding"/>
    <property type="evidence" value="ECO:0007669"/>
    <property type="project" value="UniProtKB-KW"/>
</dbReference>
<dbReference type="GO" id="GO:0008270">
    <property type="term" value="F:zinc ion binding"/>
    <property type="evidence" value="ECO:0007669"/>
    <property type="project" value="UniProtKB-UniRule"/>
</dbReference>
<dbReference type="GO" id="GO:0006419">
    <property type="term" value="P:alanyl-tRNA aminoacylation"/>
    <property type="evidence" value="ECO:0007669"/>
    <property type="project" value="UniProtKB-UniRule"/>
</dbReference>
<dbReference type="CDD" id="cd00673">
    <property type="entry name" value="AlaRS_core"/>
    <property type="match status" value="1"/>
</dbReference>
<dbReference type="FunFam" id="2.40.30.130:FF:000001">
    <property type="entry name" value="Alanine--tRNA ligase"/>
    <property type="match status" value="1"/>
</dbReference>
<dbReference type="FunFam" id="3.30.930.10:FF:000004">
    <property type="entry name" value="Alanine--tRNA ligase"/>
    <property type="match status" value="1"/>
</dbReference>
<dbReference type="FunFam" id="3.30.980.10:FF:000004">
    <property type="entry name" value="Alanine--tRNA ligase, cytoplasmic"/>
    <property type="match status" value="1"/>
</dbReference>
<dbReference type="Gene3D" id="2.40.30.130">
    <property type="match status" value="1"/>
</dbReference>
<dbReference type="Gene3D" id="3.10.310.40">
    <property type="match status" value="1"/>
</dbReference>
<dbReference type="Gene3D" id="3.30.54.20">
    <property type="match status" value="1"/>
</dbReference>
<dbReference type="Gene3D" id="6.10.250.550">
    <property type="match status" value="1"/>
</dbReference>
<dbReference type="Gene3D" id="3.30.930.10">
    <property type="entry name" value="Bira Bifunctional Protein, Domain 2"/>
    <property type="match status" value="1"/>
</dbReference>
<dbReference type="Gene3D" id="3.30.980.10">
    <property type="entry name" value="Threonyl-trna Synthetase, Chain A, domain 2"/>
    <property type="match status" value="1"/>
</dbReference>
<dbReference type="HAMAP" id="MF_00036_B">
    <property type="entry name" value="Ala_tRNA_synth_B"/>
    <property type="match status" value="1"/>
</dbReference>
<dbReference type="InterPro" id="IPR045864">
    <property type="entry name" value="aa-tRNA-synth_II/BPL/LPL"/>
</dbReference>
<dbReference type="InterPro" id="IPR002318">
    <property type="entry name" value="Ala-tRNA-lgiase_IIc"/>
</dbReference>
<dbReference type="InterPro" id="IPR018162">
    <property type="entry name" value="Ala-tRNA-ligase_IIc_anticod-bd"/>
</dbReference>
<dbReference type="InterPro" id="IPR018165">
    <property type="entry name" value="Ala-tRNA-synth_IIc_core"/>
</dbReference>
<dbReference type="InterPro" id="IPR018164">
    <property type="entry name" value="Ala-tRNA-synth_IIc_N"/>
</dbReference>
<dbReference type="InterPro" id="IPR050058">
    <property type="entry name" value="Ala-tRNA_ligase"/>
</dbReference>
<dbReference type="InterPro" id="IPR023033">
    <property type="entry name" value="Ala_tRNA_ligase_euk/bac"/>
</dbReference>
<dbReference type="InterPro" id="IPR003156">
    <property type="entry name" value="DHHA1_dom"/>
</dbReference>
<dbReference type="InterPro" id="IPR018163">
    <property type="entry name" value="Thr/Ala-tRNA-synth_IIc_edit"/>
</dbReference>
<dbReference type="InterPro" id="IPR009000">
    <property type="entry name" value="Transl_B-barrel_sf"/>
</dbReference>
<dbReference type="InterPro" id="IPR012947">
    <property type="entry name" value="tRNA_SAD"/>
</dbReference>
<dbReference type="NCBIfam" id="TIGR00344">
    <property type="entry name" value="alaS"/>
    <property type="match status" value="1"/>
</dbReference>
<dbReference type="PANTHER" id="PTHR11777:SF9">
    <property type="entry name" value="ALANINE--TRNA LIGASE, CYTOPLASMIC"/>
    <property type="match status" value="1"/>
</dbReference>
<dbReference type="PANTHER" id="PTHR11777">
    <property type="entry name" value="ALANYL-TRNA SYNTHETASE"/>
    <property type="match status" value="1"/>
</dbReference>
<dbReference type="Pfam" id="PF02272">
    <property type="entry name" value="DHHA1"/>
    <property type="match status" value="1"/>
</dbReference>
<dbReference type="Pfam" id="PF01411">
    <property type="entry name" value="tRNA-synt_2c"/>
    <property type="match status" value="1"/>
</dbReference>
<dbReference type="Pfam" id="PF07973">
    <property type="entry name" value="tRNA_SAD"/>
    <property type="match status" value="1"/>
</dbReference>
<dbReference type="PRINTS" id="PR00980">
    <property type="entry name" value="TRNASYNTHALA"/>
</dbReference>
<dbReference type="SMART" id="SM00863">
    <property type="entry name" value="tRNA_SAD"/>
    <property type="match status" value="1"/>
</dbReference>
<dbReference type="SUPFAM" id="SSF55681">
    <property type="entry name" value="Class II aaRS and biotin synthetases"/>
    <property type="match status" value="1"/>
</dbReference>
<dbReference type="SUPFAM" id="SSF101353">
    <property type="entry name" value="Putative anticodon-binding domain of alanyl-tRNA synthetase (AlaRS)"/>
    <property type="match status" value="1"/>
</dbReference>
<dbReference type="SUPFAM" id="SSF55186">
    <property type="entry name" value="ThrRS/AlaRS common domain"/>
    <property type="match status" value="1"/>
</dbReference>
<dbReference type="SUPFAM" id="SSF50447">
    <property type="entry name" value="Translation proteins"/>
    <property type="match status" value="1"/>
</dbReference>
<dbReference type="PROSITE" id="PS50860">
    <property type="entry name" value="AA_TRNA_LIGASE_II_ALA"/>
    <property type="match status" value="1"/>
</dbReference>
<reference key="1">
    <citation type="journal article" date="2005" name="Infect. Immun.">
        <title>Comparative genomic analysis of Chlamydia trachomatis oculotropic and genitotropic strains.</title>
        <authorList>
            <person name="Carlson J.H."/>
            <person name="Porcella S.F."/>
            <person name="McClarty G."/>
            <person name="Caldwell H.D."/>
        </authorList>
    </citation>
    <scope>NUCLEOTIDE SEQUENCE [LARGE SCALE GENOMIC DNA]</scope>
    <source>
        <strain>ATCC VR-571B / DSM 19440 / HAR-13</strain>
    </source>
</reference>
<comment type="function">
    <text evidence="1">Catalyzes the attachment of alanine to tRNA(Ala) in a two-step reaction: alanine is first activated by ATP to form Ala-AMP and then transferred to the acceptor end of tRNA(Ala). Also edits incorrectly charged Ser-tRNA(Ala) and Gly-tRNA(Ala) via its editing domain.</text>
</comment>
<comment type="catalytic activity">
    <reaction evidence="1">
        <text>tRNA(Ala) + L-alanine + ATP = L-alanyl-tRNA(Ala) + AMP + diphosphate</text>
        <dbReference type="Rhea" id="RHEA:12540"/>
        <dbReference type="Rhea" id="RHEA-COMP:9657"/>
        <dbReference type="Rhea" id="RHEA-COMP:9923"/>
        <dbReference type="ChEBI" id="CHEBI:30616"/>
        <dbReference type="ChEBI" id="CHEBI:33019"/>
        <dbReference type="ChEBI" id="CHEBI:57972"/>
        <dbReference type="ChEBI" id="CHEBI:78442"/>
        <dbReference type="ChEBI" id="CHEBI:78497"/>
        <dbReference type="ChEBI" id="CHEBI:456215"/>
        <dbReference type="EC" id="6.1.1.7"/>
    </reaction>
</comment>
<comment type="cofactor">
    <cofactor evidence="1">
        <name>Zn(2+)</name>
        <dbReference type="ChEBI" id="CHEBI:29105"/>
    </cofactor>
    <text evidence="1">Binds 1 zinc ion per subunit.</text>
</comment>
<comment type="subcellular location">
    <subcellularLocation>
        <location evidence="1">Cytoplasm</location>
    </subcellularLocation>
</comment>
<comment type="domain">
    <text evidence="1">Consists of three domains; the N-terminal catalytic domain, the editing domain and the C-terminal C-Ala domain. The editing domain removes incorrectly charged amino acids, while the C-Ala domain, along with tRNA(Ala), serves as a bridge to cooperatively bring together the editing and aminoacylation centers thus stimulating deacylation of misacylated tRNAs.</text>
</comment>
<comment type="similarity">
    <text evidence="1">Belongs to the class-II aminoacyl-tRNA synthetase family.</text>
</comment>
<sequence length="875" mass="97671">MLSNTLRSNFLKFYANRNHTPVASSPVFPHNDPSILFTNAGMNQFKNIFLGKEQTSYTRATTSQKCIRAGGKHNDLENVGHTSRHLTFFEMLGNFSFGDYFKQDAISFAWEVSLSIFNFDPDFIYATVHEKDDEAFALWEKYLPTDRIFRLTDKDNFWSMADTGPCGFCSELLFDRGEKFGKAASPLEDVDGERFLEYWNLVFMEFNRTSDGTLLALQKKCVDTGAGLERLVSLLAETETVFEADVLRHLISKIENLSGTTYSPTEAKGAAFRVIADHIRSLSFAIADGLLPGNTERGYVLRKILRRAVNYGKRLGFNRPFLADVVPSLVDVMGEAYPELSASVTQIQEVLTTEEEHFFKTLQRGGNLLQQVLKSSASSAKISGEDAFKLKDTYGLPIDEIALLAKDYNYAIDMDTFEKLEVEAKERSRKNTKKTKNDSDSVFQDLDPTNTSEFIGYDTLSCDTFIEGIIKYNEIASSLEEGDEGAIILRTTPFYAGKGGQIGDSGEIFCESGTFLVSHTIAPKAGLIVHLGKLSQGSLTTTMAVTAQVNQNLRKKTANNHTGCHLLHKALEMTLGEHIRQAGSYVDSQKIRLDFTHNKALSPEDLLAIETLVNEKIRENDPVTIREVLYSDVMSSSEIKQFFGDKYGDIVRVVSAGFSHELCGGTHAQATGDIGYFRITKEHAVATGIRRIEATTGEDAENIAREQDVDLNEIATVIQSPKDQILVKIRSVMEEKKDLAKQVADLENQLVQQQVKTLLTSCEKICDTSYLVYYLTEEEGQRIQHYANAIHKEIPTNFISLWITEKNGRYIVLSRVSDDLTKRGVQAHTLLAELLAPYGGRCGGKAISAQGSSAELPQIEFLNKTLRQWISTQLA</sequence>
<organism>
    <name type="scientific">Chlamydia trachomatis serovar A (strain ATCC VR-571B / DSM 19440 / HAR-13)</name>
    <dbReference type="NCBI Taxonomy" id="315277"/>
    <lineage>
        <taxon>Bacteria</taxon>
        <taxon>Pseudomonadati</taxon>
        <taxon>Chlamydiota</taxon>
        <taxon>Chlamydiia</taxon>
        <taxon>Chlamydiales</taxon>
        <taxon>Chlamydiaceae</taxon>
        <taxon>Chlamydia/Chlamydophila group</taxon>
        <taxon>Chlamydia</taxon>
    </lineage>
</organism>
<protein>
    <recommendedName>
        <fullName evidence="1">Alanine--tRNA ligase</fullName>
        <ecNumber evidence="1">6.1.1.7</ecNumber>
    </recommendedName>
    <alternativeName>
        <fullName evidence="1">Alanyl-tRNA synthetase</fullName>
        <shortName evidence="1">AlaRS</shortName>
    </alternativeName>
</protein>